<organism>
    <name type="scientific">Escherichia coli O17:K52:H18 (strain UMN026 / ExPEC)</name>
    <dbReference type="NCBI Taxonomy" id="585056"/>
    <lineage>
        <taxon>Bacteria</taxon>
        <taxon>Pseudomonadati</taxon>
        <taxon>Pseudomonadota</taxon>
        <taxon>Gammaproteobacteria</taxon>
        <taxon>Enterobacterales</taxon>
        <taxon>Enterobacteriaceae</taxon>
        <taxon>Escherichia</taxon>
    </lineage>
</organism>
<comment type="function">
    <text evidence="1">RNA chaperone that binds small regulatory RNA (sRNAs) and mRNAs to facilitate mRNA translational regulation in response to envelope stress, environmental stress and changes in metabolite concentrations. Also binds with high specificity to tRNAs.</text>
</comment>
<comment type="subunit">
    <text evidence="1">Homohexamer.</text>
</comment>
<comment type="similarity">
    <text evidence="1">Belongs to the Hfq family.</text>
</comment>
<protein>
    <recommendedName>
        <fullName evidence="1">RNA-binding protein Hfq</fullName>
    </recommendedName>
</protein>
<sequence length="102" mass="11209">MAKGQSLQDPFLNALRRERVPVSIYLVNGIKLQGQIESFDQFVILLKNTVSQMVYKHAISTVVPSRPVSHHSNNAGGSTSSNYHHGSSAQNTSAQQDSEENE</sequence>
<accession>B7NGA6</accession>
<keyword id="KW-0694">RNA-binding</keyword>
<keyword id="KW-0346">Stress response</keyword>
<evidence type="ECO:0000255" key="1">
    <source>
        <dbReference type="HAMAP-Rule" id="MF_00436"/>
    </source>
</evidence>
<evidence type="ECO:0000255" key="2">
    <source>
        <dbReference type="PROSITE-ProRule" id="PRU01346"/>
    </source>
</evidence>
<evidence type="ECO:0000256" key="3">
    <source>
        <dbReference type="SAM" id="MobiDB-lite"/>
    </source>
</evidence>
<gene>
    <name evidence="1" type="primary">hfq</name>
    <name type="ordered locus">ECUMN_4705</name>
</gene>
<proteinExistence type="inferred from homology"/>
<feature type="chain" id="PRO_1000190327" description="RNA-binding protein Hfq">
    <location>
        <begin position="1"/>
        <end position="102"/>
    </location>
</feature>
<feature type="domain" description="Sm" evidence="2">
    <location>
        <begin position="9"/>
        <end position="68"/>
    </location>
</feature>
<feature type="region of interest" description="Disordered" evidence="3">
    <location>
        <begin position="63"/>
        <end position="102"/>
    </location>
</feature>
<feature type="compositionally biased region" description="Polar residues" evidence="3">
    <location>
        <begin position="70"/>
        <end position="96"/>
    </location>
</feature>
<dbReference type="EMBL" id="CU928163">
    <property type="protein sequence ID" value="CAR15818.1"/>
    <property type="molecule type" value="Genomic_DNA"/>
</dbReference>
<dbReference type="RefSeq" id="WP_001051886.1">
    <property type="nucleotide sequence ID" value="NC_011751.1"/>
</dbReference>
<dbReference type="RefSeq" id="YP_002415302.1">
    <property type="nucleotide sequence ID" value="NC_011751.1"/>
</dbReference>
<dbReference type="SMR" id="B7NGA6"/>
<dbReference type="STRING" id="585056.ECUMN_4705"/>
<dbReference type="KEGG" id="eum:ECUMN_4705"/>
<dbReference type="PATRIC" id="fig|585056.7.peg.4868"/>
<dbReference type="HOGENOM" id="CLU_113688_2_1_6"/>
<dbReference type="Proteomes" id="UP000007097">
    <property type="component" value="Chromosome"/>
</dbReference>
<dbReference type="GO" id="GO:0005829">
    <property type="term" value="C:cytosol"/>
    <property type="evidence" value="ECO:0007669"/>
    <property type="project" value="TreeGrafter"/>
</dbReference>
<dbReference type="GO" id="GO:0003723">
    <property type="term" value="F:RNA binding"/>
    <property type="evidence" value="ECO:0007669"/>
    <property type="project" value="UniProtKB-UniRule"/>
</dbReference>
<dbReference type="GO" id="GO:0006355">
    <property type="term" value="P:regulation of DNA-templated transcription"/>
    <property type="evidence" value="ECO:0007669"/>
    <property type="project" value="InterPro"/>
</dbReference>
<dbReference type="GO" id="GO:0043487">
    <property type="term" value="P:regulation of RNA stability"/>
    <property type="evidence" value="ECO:0007669"/>
    <property type="project" value="TreeGrafter"/>
</dbReference>
<dbReference type="GO" id="GO:0045974">
    <property type="term" value="P:regulation of translation, ncRNA-mediated"/>
    <property type="evidence" value="ECO:0007669"/>
    <property type="project" value="TreeGrafter"/>
</dbReference>
<dbReference type="CDD" id="cd01716">
    <property type="entry name" value="Hfq"/>
    <property type="match status" value="1"/>
</dbReference>
<dbReference type="FunFam" id="2.30.30.100:FF:000001">
    <property type="entry name" value="RNA-binding protein Hfq"/>
    <property type="match status" value="1"/>
</dbReference>
<dbReference type="Gene3D" id="2.30.30.100">
    <property type="match status" value="1"/>
</dbReference>
<dbReference type="HAMAP" id="MF_00436">
    <property type="entry name" value="Hfq"/>
    <property type="match status" value="1"/>
</dbReference>
<dbReference type="InterPro" id="IPR005001">
    <property type="entry name" value="Hfq"/>
</dbReference>
<dbReference type="InterPro" id="IPR010920">
    <property type="entry name" value="LSM_dom_sf"/>
</dbReference>
<dbReference type="InterPro" id="IPR047575">
    <property type="entry name" value="Sm"/>
</dbReference>
<dbReference type="NCBIfam" id="TIGR02383">
    <property type="entry name" value="Hfq"/>
    <property type="match status" value="1"/>
</dbReference>
<dbReference type="NCBIfam" id="NF001602">
    <property type="entry name" value="PRK00395.1"/>
    <property type="match status" value="1"/>
</dbReference>
<dbReference type="PANTHER" id="PTHR34772">
    <property type="entry name" value="RNA-BINDING PROTEIN HFQ"/>
    <property type="match status" value="1"/>
</dbReference>
<dbReference type="PANTHER" id="PTHR34772:SF1">
    <property type="entry name" value="RNA-BINDING PROTEIN HFQ"/>
    <property type="match status" value="1"/>
</dbReference>
<dbReference type="Pfam" id="PF17209">
    <property type="entry name" value="Hfq"/>
    <property type="match status" value="1"/>
</dbReference>
<dbReference type="SUPFAM" id="SSF50182">
    <property type="entry name" value="Sm-like ribonucleoproteins"/>
    <property type="match status" value="1"/>
</dbReference>
<dbReference type="PROSITE" id="PS52002">
    <property type="entry name" value="SM"/>
    <property type="match status" value="1"/>
</dbReference>
<reference key="1">
    <citation type="journal article" date="2009" name="PLoS Genet.">
        <title>Organised genome dynamics in the Escherichia coli species results in highly diverse adaptive paths.</title>
        <authorList>
            <person name="Touchon M."/>
            <person name="Hoede C."/>
            <person name="Tenaillon O."/>
            <person name="Barbe V."/>
            <person name="Baeriswyl S."/>
            <person name="Bidet P."/>
            <person name="Bingen E."/>
            <person name="Bonacorsi S."/>
            <person name="Bouchier C."/>
            <person name="Bouvet O."/>
            <person name="Calteau A."/>
            <person name="Chiapello H."/>
            <person name="Clermont O."/>
            <person name="Cruveiller S."/>
            <person name="Danchin A."/>
            <person name="Diard M."/>
            <person name="Dossat C."/>
            <person name="Karoui M.E."/>
            <person name="Frapy E."/>
            <person name="Garry L."/>
            <person name="Ghigo J.M."/>
            <person name="Gilles A.M."/>
            <person name="Johnson J."/>
            <person name="Le Bouguenec C."/>
            <person name="Lescat M."/>
            <person name="Mangenot S."/>
            <person name="Martinez-Jehanne V."/>
            <person name="Matic I."/>
            <person name="Nassif X."/>
            <person name="Oztas S."/>
            <person name="Petit M.A."/>
            <person name="Pichon C."/>
            <person name="Rouy Z."/>
            <person name="Ruf C.S."/>
            <person name="Schneider D."/>
            <person name="Tourret J."/>
            <person name="Vacherie B."/>
            <person name="Vallenet D."/>
            <person name="Medigue C."/>
            <person name="Rocha E.P.C."/>
            <person name="Denamur E."/>
        </authorList>
    </citation>
    <scope>NUCLEOTIDE SEQUENCE [LARGE SCALE GENOMIC DNA]</scope>
    <source>
        <strain>UMN026 / ExPEC</strain>
    </source>
</reference>
<name>HFQ_ECOLU</name>